<organism>
    <name type="scientific">Limosilactobacillus reuteri (strain DSM 20016)</name>
    <name type="common">Lactobacillus reuteri</name>
    <dbReference type="NCBI Taxonomy" id="557436"/>
    <lineage>
        <taxon>Bacteria</taxon>
        <taxon>Bacillati</taxon>
        <taxon>Bacillota</taxon>
        <taxon>Bacilli</taxon>
        <taxon>Lactobacillales</taxon>
        <taxon>Lactobacillaceae</taxon>
        <taxon>Limosilactobacillus</taxon>
    </lineage>
</organism>
<accession>A5VIA4</accession>
<name>RL11_LIMRD</name>
<keyword id="KW-0488">Methylation</keyword>
<keyword id="KW-1185">Reference proteome</keyword>
<keyword id="KW-0687">Ribonucleoprotein</keyword>
<keyword id="KW-0689">Ribosomal protein</keyword>
<keyword id="KW-0694">RNA-binding</keyword>
<keyword id="KW-0699">rRNA-binding</keyword>
<comment type="function">
    <text evidence="1">Forms part of the ribosomal stalk which helps the ribosome interact with GTP-bound translation factors.</text>
</comment>
<comment type="subunit">
    <text evidence="1">Part of the ribosomal stalk of the 50S ribosomal subunit. Interacts with L10 and the large rRNA to form the base of the stalk. L10 forms an elongated spine to which L12 dimers bind in a sequential fashion forming a multimeric L10(L12)X complex.</text>
</comment>
<comment type="PTM">
    <text evidence="1">One or more lysine residues are methylated.</text>
</comment>
<comment type="similarity">
    <text evidence="1">Belongs to the universal ribosomal protein uL11 family.</text>
</comment>
<sequence length="141" mass="14869">MAKKVANIVKLQIPAGAATPAPPVGPALGQAGINIMGFTKEFNARTADQKGMLIPVVITVYEDRSFDFITKTPPAAVLLKKAAGVEHGSGEPNTNKVASVTKDQVKEIAETKMQDLNAADVEAAMRMIEGTARSMGFTVED</sequence>
<evidence type="ECO:0000255" key="1">
    <source>
        <dbReference type="HAMAP-Rule" id="MF_00736"/>
    </source>
</evidence>
<evidence type="ECO:0000305" key="2"/>
<protein>
    <recommendedName>
        <fullName evidence="1">Large ribosomal subunit protein uL11</fullName>
    </recommendedName>
    <alternativeName>
        <fullName evidence="2">50S ribosomal protein L11</fullName>
    </alternativeName>
</protein>
<gene>
    <name evidence="1" type="primary">rplK</name>
    <name type="ordered locus">Lreu_0308</name>
</gene>
<dbReference type="EMBL" id="CP000705">
    <property type="protein sequence ID" value="ABQ82578.1"/>
    <property type="molecule type" value="Genomic_DNA"/>
</dbReference>
<dbReference type="RefSeq" id="WP_003666299.1">
    <property type="nucleotide sequence ID" value="NZ_AZDD01000008.1"/>
</dbReference>
<dbReference type="SMR" id="A5VIA4"/>
<dbReference type="STRING" id="557436.Lreu_0308"/>
<dbReference type="GeneID" id="77190112"/>
<dbReference type="KEGG" id="lre:Lreu_0308"/>
<dbReference type="PATRIC" id="fig|557436.17.peg.1904"/>
<dbReference type="eggNOG" id="COG0080">
    <property type="taxonomic scope" value="Bacteria"/>
</dbReference>
<dbReference type="HOGENOM" id="CLU_074237_2_1_9"/>
<dbReference type="Proteomes" id="UP000001991">
    <property type="component" value="Chromosome"/>
</dbReference>
<dbReference type="GO" id="GO:0022625">
    <property type="term" value="C:cytosolic large ribosomal subunit"/>
    <property type="evidence" value="ECO:0007669"/>
    <property type="project" value="TreeGrafter"/>
</dbReference>
<dbReference type="GO" id="GO:0070180">
    <property type="term" value="F:large ribosomal subunit rRNA binding"/>
    <property type="evidence" value="ECO:0007669"/>
    <property type="project" value="UniProtKB-UniRule"/>
</dbReference>
<dbReference type="GO" id="GO:0003735">
    <property type="term" value="F:structural constituent of ribosome"/>
    <property type="evidence" value="ECO:0007669"/>
    <property type="project" value="InterPro"/>
</dbReference>
<dbReference type="GO" id="GO:0006412">
    <property type="term" value="P:translation"/>
    <property type="evidence" value="ECO:0007669"/>
    <property type="project" value="UniProtKB-UniRule"/>
</dbReference>
<dbReference type="CDD" id="cd00349">
    <property type="entry name" value="Ribosomal_L11"/>
    <property type="match status" value="1"/>
</dbReference>
<dbReference type="FunFam" id="1.10.10.250:FF:000001">
    <property type="entry name" value="50S ribosomal protein L11"/>
    <property type="match status" value="1"/>
</dbReference>
<dbReference type="FunFam" id="3.30.1550.10:FF:000001">
    <property type="entry name" value="50S ribosomal protein L11"/>
    <property type="match status" value="1"/>
</dbReference>
<dbReference type="Gene3D" id="1.10.10.250">
    <property type="entry name" value="Ribosomal protein L11, C-terminal domain"/>
    <property type="match status" value="1"/>
</dbReference>
<dbReference type="Gene3D" id="3.30.1550.10">
    <property type="entry name" value="Ribosomal protein L11/L12, N-terminal domain"/>
    <property type="match status" value="1"/>
</dbReference>
<dbReference type="HAMAP" id="MF_00736">
    <property type="entry name" value="Ribosomal_uL11"/>
    <property type="match status" value="1"/>
</dbReference>
<dbReference type="InterPro" id="IPR000911">
    <property type="entry name" value="Ribosomal_uL11"/>
</dbReference>
<dbReference type="InterPro" id="IPR006519">
    <property type="entry name" value="Ribosomal_uL11_bac-typ"/>
</dbReference>
<dbReference type="InterPro" id="IPR020783">
    <property type="entry name" value="Ribosomal_uL11_C"/>
</dbReference>
<dbReference type="InterPro" id="IPR036769">
    <property type="entry name" value="Ribosomal_uL11_C_sf"/>
</dbReference>
<dbReference type="InterPro" id="IPR020785">
    <property type="entry name" value="Ribosomal_uL11_CS"/>
</dbReference>
<dbReference type="InterPro" id="IPR020784">
    <property type="entry name" value="Ribosomal_uL11_N"/>
</dbReference>
<dbReference type="InterPro" id="IPR036796">
    <property type="entry name" value="Ribosomal_uL11_N_sf"/>
</dbReference>
<dbReference type="NCBIfam" id="TIGR01632">
    <property type="entry name" value="L11_bact"/>
    <property type="match status" value="1"/>
</dbReference>
<dbReference type="PANTHER" id="PTHR11661">
    <property type="entry name" value="60S RIBOSOMAL PROTEIN L12"/>
    <property type="match status" value="1"/>
</dbReference>
<dbReference type="PANTHER" id="PTHR11661:SF1">
    <property type="entry name" value="LARGE RIBOSOMAL SUBUNIT PROTEIN UL11M"/>
    <property type="match status" value="1"/>
</dbReference>
<dbReference type="Pfam" id="PF00298">
    <property type="entry name" value="Ribosomal_L11"/>
    <property type="match status" value="1"/>
</dbReference>
<dbReference type="Pfam" id="PF03946">
    <property type="entry name" value="Ribosomal_L11_N"/>
    <property type="match status" value="1"/>
</dbReference>
<dbReference type="SMART" id="SM00649">
    <property type="entry name" value="RL11"/>
    <property type="match status" value="1"/>
</dbReference>
<dbReference type="SUPFAM" id="SSF54747">
    <property type="entry name" value="Ribosomal L11/L12e N-terminal domain"/>
    <property type="match status" value="1"/>
</dbReference>
<dbReference type="SUPFAM" id="SSF46906">
    <property type="entry name" value="Ribosomal protein L11, C-terminal domain"/>
    <property type="match status" value="1"/>
</dbReference>
<dbReference type="PROSITE" id="PS00359">
    <property type="entry name" value="RIBOSOMAL_L11"/>
    <property type="match status" value="1"/>
</dbReference>
<reference key="1">
    <citation type="journal article" date="2011" name="PLoS Genet.">
        <title>The evolution of host specialization in the vertebrate gut symbiont Lactobacillus reuteri.</title>
        <authorList>
            <person name="Frese S.A."/>
            <person name="Benson A.K."/>
            <person name="Tannock G.W."/>
            <person name="Loach D.M."/>
            <person name="Kim J."/>
            <person name="Zhang M."/>
            <person name="Oh P.L."/>
            <person name="Heng N.C."/>
            <person name="Patil P.B."/>
            <person name="Juge N."/>
            <person name="Mackenzie D.A."/>
            <person name="Pearson B.M."/>
            <person name="Lapidus A."/>
            <person name="Dalin E."/>
            <person name="Tice H."/>
            <person name="Goltsman E."/>
            <person name="Land M."/>
            <person name="Hauser L."/>
            <person name="Ivanova N."/>
            <person name="Kyrpides N.C."/>
            <person name="Walter J."/>
        </authorList>
    </citation>
    <scope>NUCLEOTIDE SEQUENCE [LARGE SCALE GENOMIC DNA]</scope>
    <source>
        <strain>DSM 20016</strain>
    </source>
</reference>
<proteinExistence type="inferred from homology"/>
<feature type="chain" id="PRO_1000062137" description="Large ribosomal subunit protein uL11">
    <location>
        <begin position="1"/>
        <end position="141"/>
    </location>
</feature>